<sequence length="347" mass="38737">MNPLAQPIIYSTIFAGTLITASSSHWFLTWVGLEMNMLAFIPVLTKKMNPRSTEAAIKYFLVQATASMILMMAILSNNLLSGQWTMANITNQYSSTMMLMALAMKLGMAPFHFWVPEVTQGTTLMSGLLLLTWQKLAPISIMYQIFPVVNVNILLAFSILSIMVGSWGGLNQTQLRKILAYSSITHVGWMMAVLPYNPDITIFNLIIYIVLTTTAFLALNLNSSTTTLLLSRSWNKLTWLLPLIPSTLLSLGGLPPLTGFLPKWLVIEELTKNGTLIIPTAMAIITLINLYFYMRLIYSTSITLLPTSNNVKMKWQFENTKPTFLLPTLMTLTTLLLPIAPLTFPTP</sequence>
<geneLocation type="mitochondrion"/>
<organism>
    <name type="scientific">Hylobates lar</name>
    <name type="common">Lar gibbon</name>
    <name type="synonym">White-handed gibbon</name>
    <dbReference type="NCBI Taxonomy" id="9580"/>
    <lineage>
        <taxon>Eukaryota</taxon>
        <taxon>Metazoa</taxon>
        <taxon>Chordata</taxon>
        <taxon>Craniata</taxon>
        <taxon>Vertebrata</taxon>
        <taxon>Euteleostomi</taxon>
        <taxon>Mammalia</taxon>
        <taxon>Eutheria</taxon>
        <taxon>Euarchontoglires</taxon>
        <taxon>Primates</taxon>
        <taxon>Haplorrhini</taxon>
        <taxon>Catarrhini</taxon>
        <taxon>Hylobatidae</taxon>
        <taxon>Hylobates</taxon>
    </lineage>
</organism>
<comment type="function">
    <text evidence="1">Core subunit of the mitochondrial membrane respiratory chain NADH dehydrogenase (Complex I) which catalyzes electron transfer from NADH through the respiratory chain, using ubiquinone as an electron acceptor. Essential for the catalytic activity and assembly of complex I.</text>
</comment>
<comment type="catalytic activity">
    <reaction evidence="1">
        <text>a ubiquinone + NADH + 5 H(+)(in) = a ubiquinol + NAD(+) + 4 H(+)(out)</text>
        <dbReference type="Rhea" id="RHEA:29091"/>
        <dbReference type="Rhea" id="RHEA-COMP:9565"/>
        <dbReference type="Rhea" id="RHEA-COMP:9566"/>
        <dbReference type="ChEBI" id="CHEBI:15378"/>
        <dbReference type="ChEBI" id="CHEBI:16389"/>
        <dbReference type="ChEBI" id="CHEBI:17976"/>
        <dbReference type="ChEBI" id="CHEBI:57540"/>
        <dbReference type="ChEBI" id="CHEBI:57945"/>
        <dbReference type="EC" id="7.1.1.2"/>
    </reaction>
</comment>
<comment type="subunit">
    <text evidence="1 2">Core subunit of respiratory chain NADH dehydrogenase (Complex I) which is composed of 45 different subunits. Interacts with TMEM242 (By similarity).</text>
</comment>
<comment type="subcellular location">
    <subcellularLocation>
        <location evidence="2">Mitochondrion inner membrane</location>
        <topology evidence="3">Multi-pass membrane protein</topology>
    </subcellularLocation>
</comment>
<comment type="similarity">
    <text evidence="4">Belongs to the complex I subunit 2 family.</text>
</comment>
<gene>
    <name evidence="1" type="primary">MT-ND2</name>
    <name type="synonym">MTND2</name>
    <name type="synonym">NADH2</name>
    <name type="synonym">ND2</name>
</gene>
<proteinExistence type="inferred from homology"/>
<accession>Q95704</accession>
<reference key="1">
    <citation type="journal article" date="1996" name="Hereditas">
        <title>A complete mitochondrial DNA molecule of the white-handed gibbon, Hylobates lar, and comparison among individual mitochondrial genes of all hominoid genera.</title>
        <authorList>
            <person name="Arnason U."/>
            <person name="Gullberg A."/>
            <person name="Xu X."/>
        </authorList>
    </citation>
    <scope>NUCLEOTIDE SEQUENCE [GENOMIC DNA]</scope>
    <source>
        <strain>Isolate Ester</strain>
    </source>
</reference>
<keyword id="KW-0249">Electron transport</keyword>
<keyword id="KW-0472">Membrane</keyword>
<keyword id="KW-0496">Mitochondrion</keyword>
<keyword id="KW-0999">Mitochondrion inner membrane</keyword>
<keyword id="KW-0520">NAD</keyword>
<keyword id="KW-0679">Respiratory chain</keyword>
<keyword id="KW-1278">Translocase</keyword>
<keyword id="KW-0812">Transmembrane</keyword>
<keyword id="KW-1133">Transmembrane helix</keyword>
<keyword id="KW-0813">Transport</keyword>
<keyword id="KW-0830">Ubiquinone</keyword>
<evidence type="ECO:0000250" key="1">
    <source>
        <dbReference type="UniProtKB" id="P03891"/>
    </source>
</evidence>
<evidence type="ECO:0000250" key="2">
    <source>
        <dbReference type="UniProtKB" id="P03892"/>
    </source>
</evidence>
<evidence type="ECO:0000255" key="3"/>
<evidence type="ECO:0000305" key="4"/>
<feature type="chain" id="PRO_0000117596" description="NADH-ubiquinone oxidoreductase chain 2">
    <location>
        <begin position="1"/>
        <end position="347"/>
    </location>
</feature>
<feature type="transmembrane region" description="Helical" evidence="3">
    <location>
        <begin position="1"/>
        <end position="21"/>
    </location>
</feature>
<feature type="transmembrane region" description="Helical" evidence="3">
    <location>
        <begin position="25"/>
        <end position="45"/>
    </location>
</feature>
<feature type="transmembrane region" description="Helical" evidence="3">
    <location>
        <begin position="55"/>
        <end position="75"/>
    </location>
</feature>
<feature type="transmembrane region" description="Helical" evidence="3">
    <location>
        <begin position="96"/>
        <end position="116"/>
    </location>
</feature>
<feature type="transmembrane region" description="Helical" evidence="3">
    <location>
        <begin position="123"/>
        <end position="143"/>
    </location>
</feature>
<feature type="transmembrane region" description="Helical" evidence="3">
    <location>
        <begin position="145"/>
        <end position="165"/>
    </location>
</feature>
<feature type="transmembrane region" description="Helical" evidence="3">
    <location>
        <begin position="178"/>
        <end position="198"/>
    </location>
</feature>
<feature type="transmembrane region" description="Helical" evidence="3">
    <location>
        <begin position="200"/>
        <end position="220"/>
    </location>
</feature>
<feature type="transmembrane region" description="Helical" evidence="3">
    <location>
        <begin position="237"/>
        <end position="257"/>
    </location>
</feature>
<feature type="transmembrane region" description="Helical" evidence="3">
    <location>
        <begin position="274"/>
        <end position="294"/>
    </location>
</feature>
<feature type="transmembrane region" description="Helical" evidence="3">
    <location>
        <begin position="324"/>
        <end position="344"/>
    </location>
</feature>
<protein>
    <recommendedName>
        <fullName evidence="1">NADH-ubiquinone oxidoreductase chain 2</fullName>
        <ecNumber evidence="1">7.1.1.2</ecNumber>
    </recommendedName>
    <alternativeName>
        <fullName>NADH dehydrogenase subunit 2</fullName>
    </alternativeName>
</protein>
<name>NU2M_HYLLA</name>
<dbReference type="EC" id="7.1.1.2" evidence="1"/>
<dbReference type="EMBL" id="X99256">
    <property type="protein sequence ID" value="CAA67629.1"/>
    <property type="molecule type" value="Genomic_DNA"/>
</dbReference>
<dbReference type="PIR" id="T11834">
    <property type="entry name" value="T11834"/>
</dbReference>
<dbReference type="RefSeq" id="NP_007823.1">
    <property type="nucleotide sequence ID" value="NC_002082.1"/>
</dbReference>
<dbReference type="SMR" id="Q95704"/>
<dbReference type="GeneID" id="808468"/>
<dbReference type="CTD" id="4536"/>
<dbReference type="GO" id="GO:0005743">
    <property type="term" value="C:mitochondrial inner membrane"/>
    <property type="evidence" value="ECO:0000250"/>
    <property type="project" value="UniProtKB"/>
</dbReference>
<dbReference type="GO" id="GO:0008137">
    <property type="term" value="F:NADH dehydrogenase (ubiquinone) activity"/>
    <property type="evidence" value="ECO:0000250"/>
    <property type="project" value="UniProtKB"/>
</dbReference>
<dbReference type="GO" id="GO:0006120">
    <property type="term" value="P:mitochondrial electron transport, NADH to ubiquinone"/>
    <property type="evidence" value="ECO:0000250"/>
    <property type="project" value="UniProtKB"/>
</dbReference>
<dbReference type="GO" id="GO:0032981">
    <property type="term" value="P:mitochondrial respiratory chain complex I assembly"/>
    <property type="evidence" value="ECO:0000250"/>
    <property type="project" value="UniProtKB"/>
</dbReference>
<dbReference type="InterPro" id="IPR050175">
    <property type="entry name" value="Complex_I_Subunit_2"/>
</dbReference>
<dbReference type="InterPro" id="IPR010933">
    <property type="entry name" value="NADH_DH_su2_C"/>
</dbReference>
<dbReference type="InterPro" id="IPR003917">
    <property type="entry name" value="NADH_UbQ_OxRdtase_chain2"/>
</dbReference>
<dbReference type="InterPro" id="IPR001750">
    <property type="entry name" value="ND/Mrp_TM"/>
</dbReference>
<dbReference type="PANTHER" id="PTHR46552">
    <property type="entry name" value="NADH-UBIQUINONE OXIDOREDUCTASE CHAIN 2"/>
    <property type="match status" value="1"/>
</dbReference>
<dbReference type="PANTHER" id="PTHR46552:SF1">
    <property type="entry name" value="NADH-UBIQUINONE OXIDOREDUCTASE CHAIN 2"/>
    <property type="match status" value="1"/>
</dbReference>
<dbReference type="Pfam" id="PF06444">
    <property type="entry name" value="NADH_dehy_S2_C"/>
    <property type="match status" value="1"/>
</dbReference>
<dbReference type="Pfam" id="PF00361">
    <property type="entry name" value="Proton_antipo_M"/>
    <property type="match status" value="1"/>
</dbReference>
<dbReference type="PRINTS" id="PR01436">
    <property type="entry name" value="NADHDHGNASE2"/>
</dbReference>